<keyword id="KW-1185">Reference proteome</keyword>
<keyword id="KW-0677">Repeat</keyword>
<accession>Q45221</accession>
<sequence>MNALSEHILSELRRLLSEMSDGGSVGPSVYDTAQALRFHGNVTGRQDAYAWLIAQQQADGGWGSADFPLFRHAPTWAALLALQRADPLPGAADAVQTATRFLQRQPDPYAHAVPEDAPIGAELILPQFCGEAASLLGGVAFPRHPALLPLRQACLVKLGAVAMLPSGHPLLHSWEAWGTSPTTACPDDDGSIGISPAATAAWRAQAVTRGSTPQVGRADAYLQMASRATRSGIEGVFPNVWPINVFEPCWSLYTLHLAGLFAHPALAEAVRVIVAQLDARLGVHGLGPALHFAADADDTAVALCVLHLAGRDPAVDALRHFEIGELFVTFPGERNASVSTNIHALHALRLLGKPAAGASAYVEANRNPHGLWDNEKWHVSWLYPTAHAVAALAQGKPQWRDERALAALLQAQRDDGGWGAGRGSTFEETAYALFALHVMDGSEEATGRRRIAQVVARALEWMLARHAAHGLPQTPLWIGKELYCPTRVVRVAELAGLWLALRWGRRVLAEGAGAAP</sequence>
<evidence type="ECO:0000305" key="1"/>
<name>Y2149_BRADU</name>
<protein>
    <recommendedName>
        <fullName>Uncharacterized protein blr2149</fullName>
    </recommendedName>
    <alternativeName>
        <fullName>ORF7</fullName>
    </alternativeName>
</protein>
<feature type="chain" id="PRO_0000208810" description="Uncharacterized protein blr2149">
    <location>
        <begin position="1"/>
        <end position="516"/>
    </location>
</feature>
<feature type="repeat" description="PFTB 1">
    <location>
        <begin position="45"/>
        <end position="86"/>
    </location>
</feature>
<feature type="repeat" description="PFTB 2">
    <location>
        <begin position="401"/>
        <end position="443"/>
    </location>
</feature>
<feature type="sequence conflict" description="In Ref. 1 and 2." evidence="1" ref="1 2">
    <original>S</original>
    <variation>W</variation>
    <location>
        <position position="134"/>
    </location>
</feature>
<feature type="sequence conflict" description="In Ref. 1 and 2." evidence="1" ref="1 2">
    <original>D</original>
    <variation>E</variation>
    <location>
        <position position="278"/>
    </location>
</feature>
<organism>
    <name type="scientific">Bradyrhizobium diazoefficiens (strain JCM 10833 / BCRC 13528 / IAM 13628 / NBRC 14792 / USDA 110)</name>
    <dbReference type="NCBI Taxonomy" id="224911"/>
    <lineage>
        <taxon>Bacteria</taxon>
        <taxon>Pseudomonadati</taxon>
        <taxon>Pseudomonadota</taxon>
        <taxon>Alphaproteobacteria</taxon>
        <taxon>Hyphomicrobiales</taxon>
        <taxon>Nitrobacteraceae</taxon>
        <taxon>Bradyrhizobium</taxon>
    </lineage>
</organism>
<dbReference type="EMBL" id="U12678">
    <property type="protein sequence ID" value="AAC28895.1"/>
    <property type="molecule type" value="Genomic_DNA"/>
</dbReference>
<dbReference type="EMBL" id="BA000040">
    <property type="protein sequence ID" value="BAC47414.1"/>
    <property type="status" value="ALT_INIT"/>
    <property type="molecule type" value="Genomic_DNA"/>
</dbReference>
<dbReference type="PIR" id="I40214">
    <property type="entry name" value="I40214"/>
</dbReference>
<dbReference type="RefSeq" id="NP_768789.1">
    <property type="nucleotide sequence ID" value="NC_004463.1"/>
</dbReference>
<dbReference type="RefSeq" id="WP_026312707.1">
    <property type="nucleotide sequence ID" value="NZ_CP011360.1"/>
</dbReference>
<dbReference type="SMR" id="Q45221"/>
<dbReference type="STRING" id="224911.AAV28_07590"/>
<dbReference type="EnsemblBacteria" id="BAC47414">
    <property type="protein sequence ID" value="BAC47414"/>
    <property type="gene ID" value="BAC47414"/>
</dbReference>
<dbReference type="KEGG" id="bja:blr2149"/>
<dbReference type="PATRIC" id="fig|224911.44.peg.1665"/>
<dbReference type="eggNOG" id="COG1657">
    <property type="taxonomic scope" value="Bacteria"/>
</dbReference>
<dbReference type="HOGENOM" id="CLU_041269_0_0_5"/>
<dbReference type="InParanoid" id="Q45221"/>
<dbReference type="OrthoDB" id="9758578at2"/>
<dbReference type="Proteomes" id="UP000002526">
    <property type="component" value="Chromosome"/>
</dbReference>
<dbReference type="GO" id="GO:0010333">
    <property type="term" value="F:terpene synthase activity"/>
    <property type="evidence" value="ECO:0007669"/>
    <property type="project" value="InterPro"/>
</dbReference>
<dbReference type="GO" id="GO:0016114">
    <property type="term" value="P:terpenoid biosynthetic process"/>
    <property type="evidence" value="ECO:0007669"/>
    <property type="project" value="InterPro"/>
</dbReference>
<dbReference type="CDD" id="cd00688">
    <property type="entry name" value="ISOPREN_C2_like"/>
    <property type="match status" value="1"/>
</dbReference>
<dbReference type="Gene3D" id="1.50.10.160">
    <property type="match status" value="1"/>
</dbReference>
<dbReference type="Gene3D" id="1.50.10.20">
    <property type="match status" value="1"/>
</dbReference>
<dbReference type="InterPro" id="IPR050148">
    <property type="entry name" value="Terpene_synthase-like"/>
</dbReference>
<dbReference type="InterPro" id="IPR008930">
    <property type="entry name" value="Terpenoid_cyclase/PrenylTrfase"/>
</dbReference>
<dbReference type="PANTHER" id="PTHR31739:SF25">
    <property type="entry name" value="(E,E)-GERANYLLINALOOL SYNTHASE"/>
    <property type="match status" value="1"/>
</dbReference>
<dbReference type="PANTHER" id="PTHR31739">
    <property type="entry name" value="ENT-COPALYL DIPHOSPHATE SYNTHASE, CHLOROPLASTIC"/>
    <property type="match status" value="1"/>
</dbReference>
<dbReference type="SUPFAM" id="SSF48239">
    <property type="entry name" value="Terpenoid cyclases/Protein prenyltransferases"/>
    <property type="match status" value="2"/>
</dbReference>
<proteinExistence type="predicted"/>
<gene>
    <name type="ordered locus">blr2149</name>
</gene>
<comment type="sequence caution" evidence="1">
    <conflict type="erroneous initiation">
        <sequence resource="EMBL-CDS" id="BAC47414"/>
    </conflict>
</comment>
<reference key="1">
    <citation type="journal article" date="1993" name="Appl. Environ. Microbiol.">
        <title>Cloning and mutagenesis of a cytochrome P-450 locus from Bradyrhizobium japonicum that is expressed anaerobically and symbiotically.</title>
        <authorList>
            <person name="Tully R.E."/>
            <person name="Keister D.L."/>
        </authorList>
    </citation>
    <scope>NUCLEOTIDE SEQUENCE [GENOMIC DNA]</scope>
    <source>
        <strain>JCM 10833 / BCRC 13528 / IAM 13628 / NBRC 14792 / USDA 110</strain>
    </source>
</reference>
<reference key="2">
    <citation type="journal article" date="1998" name="Biochim. Biophys. Acta">
        <title>Identification and sequencing of a cytochrome P450 gene cluster from Bradyrhizobium japonicum.</title>
        <authorList>
            <person name="Tully R.E."/>
            <person name="van Berkum P."/>
            <person name="Lovins K.W."/>
            <person name="Keister D.L."/>
        </authorList>
    </citation>
    <scope>NUCLEOTIDE SEQUENCE [GENOMIC DNA]</scope>
    <source>
        <strain>JCM 10833 / BCRC 13528 / IAM 13628 / NBRC 14792 / USDA 110</strain>
    </source>
</reference>
<reference key="3">
    <citation type="journal article" date="2002" name="DNA Res.">
        <title>Complete genomic sequence of nitrogen-fixing symbiotic bacterium Bradyrhizobium japonicum USDA110.</title>
        <authorList>
            <person name="Kaneko T."/>
            <person name="Nakamura Y."/>
            <person name="Sato S."/>
            <person name="Minamisawa K."/>
            <person name="Uchiumi T."/>
            <person name="Sasamoto S."/>
            <person name="Watanabe A."/>
            <person name="Idesawa K."/>
            <person name="Iriguchi M."/>
            <person name="Kawashima K."/>
            <person name="Kohara M."/>
            <person name="Matsumoto M."/>
            <person name="Shimpo S."/>
            <person name="Tsuruoka H."/>
            <person name="Wada T."/>
            <person name="Yamada M."/>
            <person name="Tabata S."/>
        </authorList>
    </citation>
    <scope>NUCLEOTIDE SEQUENCE [LARGE SCALE GENOMIC DNA]</scope>
    <source>
        <strain>JCM 10833 / BCRC 13528 / IAM 13628 / NBRC 14792 / USDA 110</strain>
    </source>
</reference>